<gene>
    <name evidence="1" type="primary">der</name>
    <name type="synonym">engA</name>
    <name type="ordered locus">Gmet_2314</name>
</gene>
<protein>
    <recommendedName>
        <fullName evidence="1">GTPase Der</fullName>
    </recommendedName>
    <alternativeName>
        <fullName evidence="1">GTP-binding protein EngA</fullName>
    </alternativeName>
</protein>
<dbReference type="EMBL" id="CP000148">
    <property type="protein sequence ID" value="ABB32539.1"/>
    <property type="molecule type" value="Genomic_DNA"/>
</dbReference>
<dbReference type="RefSeq" id="WP_004513306.1">
    <property type="nucleotide sequence ID" value="NC_007517.1"/>
</dbReference>
<dbReference type="SMR" id="Q39T85"/>
<dbReference type="STRING" id="269799.Gmet_2314"/>
<dbReference type="KEGG" id="gme:Gmet_2314"/>
<dbReference type="eggNOG" id="COG1160">
    <property type="taxonomic scope" value="Bacteria"/>
</dbReference>
<dbReference type="HOGENOM" id="CLU_016077_6_2_7"/>
<dbReference type="Proteomes" id="UP000007073">
    <property type="component" value="Chromosome"/>
</dbReference>
<dbReference type="GO" id="GO:0005525">
    <property type="term" value="F:GTP binding"/>
    <property type="evidence" value="ECO:0007669"/>
    <property type="project" value="UniProtKB-UniRule"/>
</dbReference>
<dbReference type="GO" id="GO:0043022">
    <property type="term" value="F:ribosome binding"/>
    <property type="evidence" value="ECO:0007669"/>
    <property type="project" value="TreeGrafter"/>
</dbReference>
<dbReference type="GO" id="GO:0042254">
    <property type="term" value="P:ribosome biogenesis"/>
    <property type="evidence" value="ECO:0007669"/>
    <property type="project" value="UniProtKB-KW"/>
</dbReference>
<dbReference type="CDD" id="cd01894">
    <property type="entry name" value="EngA1"/>
    <property type="match status" value="1"/>
</dbReference>
<dbReference type="CDD" id="cd01895">
    <property type="entry name" value="EngA2"/>
    <property type="match status" value="1"/>
</dbReference>
<dbReference type="FunFam" id="3.30.300.20:FF:000004">
    <property type="entry name" value="GTPase Der"/>
    <property type="match status" value="1"/>
</dbReference>
<dbReference type="FunFam" id="3.40.50.300:FF:000040">
    <property type="entry name" value="GTPase Der"/>
    <property type="match status" value="1"/>
</dbReference>
<dbReference type="FunFam" id="3.40.50.300:FF:000057">
    <property type="entry name" value="GTPase Der"/>
    <property type="match status" value="1"/>
</dbReference>
<dbReference type="Gene3D" id="3.30.300.20">
    <property type="match status" value="1"/>
</dbReference>
<dbReference type="Gene3D" id="3.40.50.300">
    <property type="entry name" value="P-loop containing nucleotide triphosphate hydrolases"/>
    <property type="match status" value="2"/>
</dbReference>
<dbReference type="HAMAP" id="MF_00195">
    <property type="entry name" value="GTPase_Der"/>
    <property type="match status" value="1"/>
</dbReference>
<dbReference type="InterPro" id="IPR031166">
    <property type="entry name" value="G_ENGA"/>
</dbReference>
<dbReference type="InterPro" id="IPR006073">
    <property type="entry name" value="GTP-bd"/>
</dbReference>
<dbReference type="InterPro" id="IPR016484">
    <property type="entry name" value="GTPase_Der"/>
</dbReference>
<dbReference type="InterPro" id="IPR032859">
    <property type="entry name" value="KH_dom-like"/>
</dbReference>
<dbReference type="InterPro" id="IPR015946">
    <property type="entry name" value="KH_dom-like_a/b"/>
</dbReference>
<dbReference type="InterPro" id="IPR027417">
    <property type="entry name" value="P-loop_NTPase"/>
</dbReference>
<dbReference type="InterPro" id="IPR005225">
    <property type="entry name" value="Small_GTP-bd"/>
</dbReference>
<dbReference type="NCBIfam" id="TIGR03594">
    <property type="entry name" value="GTPase_EngA"/>
    <property type="match status" value="1"/>
</dbReference>
<dbReference type="NCBIfam" id="TIGR00231">
    <property type="entry name" value="small_GTP"/>
    <property type="match status" value="2"/>
</dbReference>
<dbReference type="PANTHER" id="PTHR43834">
    <property type="entry name" value="GTPASE DER"/>
    <property type="match status" value="1"/>
</dbReference>
<dbReference type="PANTHER" id="PTHR43834:SF6">
    <property type="entry name" value="GTPASE DER"/>
    <property type="match status" value="1"/>
</dbReference>
<dbReference type="Pfam" id="PF14714">
    <property type="entry name" value="KH_dom-like"/>
    <property type="match status" value="1"/>
</dbReference>
<dbReference type="Pfam" id="PF01926">
    <property type="entry name" value="MMR_HSR1"/>
    <property type="match status" value="2"/>
</dbReference>
<dbReference type="PIRSF" id="PIRSF006485">
    <property type="entry name" value="GTP-binding_EngA"/>
    <property type="match status" value="1"/>
</dbReference>
<dbReference type="PRINTS" id="PR00326">
    <property type="entry name" value="GTP1OBG"/>
</dbReference>
<dbReference type="SUPFAM" id="SSF52540">
    <property type="entry name" value="P-loop containing nucleoside triphosphate hydrolases"/>
    <property type="match status" value="2"/>
</dbReference>
<dbReference type="PROSITE" id="PS51712">
    <property type="entry name" value="G_ENGA"/>
    <property type="match status" value="2"/>
</dbReference>
<organism>
    <name type="scientific">Geobacter metallireducens (strain ATCC 53774 / DSM 7210 / GS-15)</name>
    <dbReference type="NCBI Taxonomy" id="269799"/>
    <lineage>
        <taxon>Bacteria</taxon>
        <taxon>Pseudomonadati</taxon>
        <taxon>Thermodesulfobacteriota</taxon>
        <taxon>Desulfuromonadia</taxon>
        <taxon>Geobacterales</taxon>
        <taxon>Geobacteraceae</taxon>
        <taxon>Geobacter</taxon>
    </lineage>
</organism>
<accession>Q39T85</accession>
<keyword id="KW-0342">GTP-binding</keyword>
<keyword id="KW-0547">Nucleotide-binding</keyword>
<keyword id="KW-1185">Reference proteome</keyword>
<keyword id="KW-0677">Repeat</keyword>
<keyword id="KW-0690">Ribosome biogenesis</keyword>
<reference key="1">
    <citation type="journal article" date="2009" name="BMC Microbiol.">
        <title>The genome sequence of Geobacter metallireducens: features of metabolism, physiology and regulation common and dissimilar to Geobacter sulfurreducens.</title>
        <authorList>
            <person name="Aklujkar M."/>
            <person name="Krushkal J."/>
            <person name="DiBartolo G."/>
            <person name="Lapidus A."/>
            <person name="Land M.L."/>
            <person name="Lovley D.R."/>
        </authorList>
    </citation>
    <scope>NUCLEOTIDE SEQUENCE [LARGE SCALE GENOMIC DNA]</scope>
    <source>
        <strain>ATCC 53774 / DSM 7210 / GS-15</strain>
    </source>
</reference>
<comment type="function">
    <text evidence="1">GTPase that plays an essential role in the late steps of ribosome biogenesis.</text>
</comment>
<comment type="subunit">
    <text evidence="1">Associates with the 50S ribosomal subunit.</text>
</comment>
<comment type="similarity">
    <text evidence="1">Belongs to the TRAFAC class TrmE-Era-EngA-EngB-Septin-like GTPase superfamily. EngA (Der) GTPase family.</text>
</comment>
<feature type="chain" id="PRO_1000099126" description="GTPase Der">
    <location>
        <begin position="1"/>
        <end position="439"/>
    </location>
</feature>
<feature type="domain" description="EngA-type G 1">
    <location>
        <begin position="3"/>
        <end position="167"/>
    </location>
</feature>
<feature type="domain" description="EngA-type G 2">
    <location>
        <begin position="176"/>
        <end position="351"/>
    </location>
</feature>
<feature type="domain" description="KH-like" evidence="1">
    <location>
        <begin position="352"/>
        <end position="436"/>
    </location>
</feature>
<feature type="binding site" evidence="1">
    <location>
        <begin position="9"/>
        <end position="16"/>
    </location>
    <ligand>
        <name>GTP</name>
        <dbReference type="ChEBI" id="CHEBI:37565"/>
        <label>1</label>
    </ligand>
</feature>
<feature type="binding site" evidence="1">
    <location>
        <begin position="56"/>
        <end position="60"/>
    </location>
    <ligand>
        <name>GTP</name>
        <dbReference type="ChEBI" id="CHEBI:37565"/>
        <label>1</label>
    </ligand>
</feature>
<feature type="binding site" evidence="1">
    <location>
        <begin position="119"/>
        <end position="122"/>
    </location>
    <ligand>
        <name>GTP</name>
        <dbReference type="ChEBI" id="CHEBI:37565"/>
        <label>1</label>
    </ligand>
</feature>
<feature type="binding site" evidence="1">
    <location>
        <begin position="182"/>
        <end position="189"/>
    </location>
    <ligand>
        <name>GTP</name>
        <dbReference type="ChEBI" id="CHEBI:37565"/>
        <label>2</label>
    </ligand>
</feature>
<feature type="binding site" evidence="1">
    <location>
        <begin position="229"/>
        <end position="233"/>
    </location>
    <ligand>
        <name>GTP</name>
        <dbReference type="ChEBI" id="CHEBI:37565"/>
        <label>2</label>
    </ligand>
</feature>
<feature type="binding site" evidence="1">
    <location>
        <begin position="294"/>
        <end position="297"/>
    </location>
    <ligand>
        <name>GTP</name>
        <dbReference type="ChEBI" id="CHEBI:37565"/>
        <label>2</label>
    </ligand>
</feature>
<proteinExistence type="inferred from homology"/>
<evidence type="ECO:0000255" key="1">
    <source>
        <dbReference type="HAMAP-Rule" id="MF_00195"/>
    </source>
</evidence>
<sequence>MMPLVAIVGRPNVGKSTLFNRLVGRRKAIVDDMPGVTRDRNYETVTRFEAPFILIDTGGFEPVSEDRLLQQMREQSQLAMEEADVIIFLMDGRAGLTPSDVEVVEMLRRVKKPVFFVVNKVDGEKIENEAADFYTLGIGTLHTISAEHNRGVNDLMEEVVAALPKSSTRLDDEDITRIAVVGRPNVGKSSLVNRLLGFERVVANPTPGTTRDSVDTLFACNKKRYLLIDTAGIRRKGKTTQKLEKYSVVDSLRSIERADVVLIIINAEEGVTEQDERIAGYAFEAGKACIFVVNKWDTLAKDNSTLGKFVDQIKTEFKYLSFAPIVFVSAKSGQRINRVMEEVERVMAQYSKRVSTSDLNRVFSEAVEKHHAPLSHGRRVKFYFATQVGTKPPTFVLFTNQPEGVHFSYERYLMNKFREAFDFTGSPLKIIFRGRDRRE</sequence>
<name>DER_GEOMG</name>